<proteinExistence type="inferred from homology"/>
<keyword id="KW-0687">Ribonucleoprotein</keyword>
<keyword id="KW-0689">Ribosomal protein</keyword>
<dbReference type="EMBL" id="CP000463">
    <property type="protein sequence ID" value="ABJ04457.1"/>
    <property type="molecule type" value="Genomic_DNA"/>
</dbReference>
<dbReference type="SMR" id="Q07UC7"/>
<dbReference type="STRING" id="316055.RPE_0498"/>
<dbReference type="KEGG" id="rpe:RPE_0498"/>
<dbReference type="eggNOG" id="COG0291">
    <property type="taxonomic scope" value="Bacteria"/>
</dbReference>
<dbReference type="HOGENOM" id="CLU_169643_2_1_5"/>
<dbReference type="OrthoDB" id="9804851at2"/>
<dbReference type="GO" id="GO:0022625">
    <property type="term" value="C:cytosolic large ribosomal subunit"/>
    <property type="evidence" value="ECO:0007669"/>
    <property type="project" value="TreeGrafter"/>
</dbReference>
<dbReference type="GO" id="GO:0003735">
    <property type="term" value="F:structural constituent of ribosome"/>
    <property type="evidence" value="ECO:0007669"/>
    <property type="project" value="InterPro"/>
</dbReference>
<dbReference type="GO" id="GO:0006412">
    <property type="term" value="P:translation"/>
    <property type="evidence" value="ECO:0007669"/>
    <property type="project" value="UniProtKB-UniRule"/>
</dbReference>
<dbReference type="FunFam" id="4.10.410.60:FF:000001">
    <property type="entry name" value="50S ribosomal protein L35"/>
    <property type="match status" value="1"/>
</dbReference>
<dbReference type="Gene3D" id="4.10.410.60">
    <property type="match status" value="1"/>
</dbReference>
<dbReference type="HAMAP" id="MF_00514">
    <property type="entry name" value="Ribosomal_bL35"/>
    <property type="match status" value="1"/>
</dbReference>
<dbReference type="InterPro" id="IPR001706">
    <property type="entry name" value="Ribosomal_bL35"/>
</dbReference>
<dbReference type="InterPro" id="IPR021137">
    <property type="entry name" value="Ribosomal_bL35-like"/>
</dbReference>
<dbReference type="InterPro" id="IPR018265">
    <property type="entry name" value="Ribosomal_bL35_CS"/>
</dbReference>
<dbReference type="InterPro" id="IPR037229">
    <property type="entry name" value="Ribosomal_bL35_sf"/>
</dbReference>
<dbReference type="NCBIfam" id="TIGR00001">
    <property type="entry name" value="rpmI_bact"/>
    <property type="match status" value="1"/>
</dbReference>
<dbReference type="PANTHER" id="PTHR33343">
    <property type="entry name" value="54S RIBOSOMAL PROTEIN BL35M"/>
    <property type="match status" value="1"/>
</dbReference>
<dbReference type="PANTHER" id="PTHR33343:SF1">
    <property type="entry name" value="LARGE RIBOSOMAL SUBUNIT PROTEIN BL35M"/>
    <property type="match status" value="1"/>
</dbReference>
<dbReference type="Pfam" id="PF01632">
    <property type="entry name" value="Ribosomal_L35p"/>
    <property type="match status" value="1"/>
</dbReference>
<dbReference type="PRINTS" id="PR00064">
    <property type="entry name" value="RIBOSOMALL35"/>
</dbReference>
<dbReference type="SUPFAM" id="SSF143034">
    <property type="entry name" value="L35p-like"/>
    <property type="match status" value="1"/>
</dbReference>
<dbReference type="PROSITE" id="PS00936">
    <property type="entry name" value="RIBOSOMAL_L35"/>
    <property type="match status" value="1"/>
</dbReference>
<accession>Q07UC7</accession>
<sequence length="66" mass="7485">MPKLKTKSGAKKRFKVTGTGKVMSAHAGKRHGMIKRTKKQIRQLRGTRVLFKTDGDNIKQYFLPNA</sequence>
<gene>
    <name evidence="1" type="primary">rpmI</name>
    <name type="ordered locus">RPE_0498</name>
</gene>
<protein>
    <recommendedName>
        <fullName evidence="1">Large ribosomal subunit protein bL35</fullName>
    </recommendedName>
    <alternativeName>
        <fullName evidence="3">50S ribosomal protein L35</fullName>
    </alternativeName>
</protein>
<feature type="chain" id="PRO_1000050751" description="Large ribosomal subunit protein bL35">
    <location>
        <begin position="1"/>
        <end position="66"/>
    </location>
</feature>
<feature type="region of interest" description="Disordered" evidence="2">
    <location>
        <begin position="1"/>
        <end position="40"/>
    </location>
</feature>
<feature type="compositionally biased region" description="Basic residues" evidence="2">
    <location>
        <begin position="1"/>
        <end position="15"/>
    </location>
</feature>
<feature type="compositionally biased region" description="Basic residues" evidence="2">
    <location>
        <begin position="27"/>
        <end position="40"/>
    </location>
</feature>
<name>RL35_RHOP5</name>
<comment type="similarity">
    <text evidence="1">Belongs to the bacterial ribosomal protein bL35 family.</text>
</comment>
<evidence type="ECO:0000255" key="1">
    <source>
        <dbReference type="HAMAP-Rule" id="MF_00514"/>
    </source>
</evidence>
<evidence type="ECO:0000256" key="2">
    <source>
        <dbReference type="SAM" id="MobiDB-lite"/>
    </source>
</evidence>
<evidence type="ECO:0000305" key="3"/>
<reference key="1">
    <citation type="submission" date="2006-09" db="EMBL/GenBank/DDBJ databases">
        <title>Complete sequence of Rhodopseudomonas palustris BisA53.</title>
        <authorList>
            <consortium name="US DOE Joint Genome Institute"/>
            <person name="Copeland A."/>
            <person name="Lucas S."/>
            <person name="Lapidus A."/>
            <person name="Barry K."/>
            <person name="Detter J.C."/>
            <person name="Glavina del Rio T."/>
            <person name="Hammon N."/>
            <person name="Israni S."/>
            <person name="Dalin E."/>
            <person name="Tice H."/>
            <person name="Pitluck S."/>
            <person name="Chain P."/>
            <person name="Malfatti S."/>
            <person name="Shin M."/>
            <person name="Vergez L."/>
            <person name="Schmutz J."/>
            <person name="Larimer F."/>
            <person name="Land M."/>
            <person name="Hauser L."/>
            <person name="Pelletier D.A."/>
            <person name="Kyrpides N."/>
            <person name="Kim E."/>
            <person name="Harwood C.S."/>
            <person name="Oda Y."/>
            <person name="Richardson P."/>
        </authorList>
    </citation>
    <scope>NUCLEOTIDE SEQUENCE [LARGE SCALE GENOMIC DNA]</scope>
    <source>
        <strain>BisA53</strain>
    </source>
</reference>
<organism>
    <name type="scientific">Rhodopseudomonas palustris (strain BisA53)</name>
    <dbReference type="NCBI Taxonomy" id="316055"/>
    <lineage>
        <taxon>Bacteria</taxon>
        <taxon>Pseudomonadati</taxon>
        <taxon>Pseudomonadota</taxon>
        <taxon>Alphaproteobacteria</taxon>
        <taxon>Hyphomicrobiales</taxon>
        <taxon>Nitrobacteraceae</taxon>
        <taxon>Rhodopseudomonas</taxon>
    </lineage>
</organism>